<accession>A5FRX7</accession>
<name>RL18_DEHMB</name>
<keyword id="KW-0687">Ribonucleoprotein</keyword>
<keyword id="KW-0689">Ribosomal protein</keyword>
<keyword id="KW-0694">RNA-binding</keyword>
<keyword id="KW-0699">rRNA-binding</keyword>
<reference key="1">
    <citation type="submission" date="2007-05" db="EMBL/GenBank/DDBJ databases">
        <title>Complete sequence of Dehalococcoides sp. BAV1.</title>
        <authorList>
            <consortium name="US DOE Joint Genome Institute"/>
            <person name="Copeland A."/>
            <person name="Lucas S."/>
            <person name="Lapidus A."/>
            <person name="Barry K."/>
            <person name="Detter J.C."/>
            <person name="Glavina del Rio T."/>
            <person name="Hammon N."/>
            <person name="Israni S."/>
            <person name="Pitluck S."/>
            <person name="Lowry S."/>
            <person name="Clum A."/>
            <person name="Schmutz J."/>
            <person name="Larimer F."/>
            <person name="Land M."/>
            <person name="Hauser L."/>
            <person name="Kyrpides N."/>
            <person name="Kim E."/>
            <person name="Ritalahti K.M."/>
            <person name="Loeffler F."/>
            <person name="Richardson P."/>
        </authorList>
    </citation>
    <scope>NUCLEOTIDE SEQUENCE [LARGE SCALE GENOMIC DNA]</scope>
    <source>
        <strain>ATCC BAA-2100 / JCM 16839 / KCTC 5957 / BAV1</strain>
    </source>
</reference>
<protein>
    <recommendedName>
        <fullName evidence="1">Large ribosomal subunit protein uL18</fullName>
    </recommendedName>
    <alternativeName>
        <fullName evidence="2">50S ribosomal protein L18</fullName>
    </alternativeName>
</protein>
<evidence type="ECO:0000255" key="1">
    <source>
        <dbReference type="HAMAP-Rule" id="MF_01337"/>
    </source>
</evidence>
<evidence type="ECO:0000305" key="2"/>
<proteinExistence type="inferred from homology"/>
<sequence length="121" mass="13331">MAKVNAREARIVRHERLRKKVSGTEARPRLCVFRSIENIYTQVINDNCGSTLVQASTKDAELKAELDGKTKTEQAVVIGNLIAKRSLEAGISEVVFDRGGYKYHGRVKALAEAARSGGLKF</sequence>
<organism>
    <name type="scientific">Dehalococcoides mccartyi (strain ATCC BAA-2100 / JCM 16839 / KCTC 5957 / BAV1)</name>
    <dbReference type="NCBI Taxonomy" id="216389"/>
    <lineage>
        <taxon>Bacteria</taxon>
        <taxon>Bacillati</taxon>
        <taxon>Chloroflexota</taxon>
        <taxon>Dehalococcoidia</taxon>
        <taxon>Dehalococcoidales</taxon>
        <taxon>Dehalococcoidaceae</taxon>
        <taxon>Dehalococcoides</taxon>
    </lineage>
</organism>
<feature type="chain" id="PRO_1000086662" description="Large ribosomal subunit protein uL18">
    <location>
        <begin position="1"/>
        <end position="121"/>
    </location>
</feature>
<dbReference type="EMBL" id="CP000688">
    <property type="protein sequence ID" value="ABQ17052.1"/>
    <property type="molecule type" value="Genomic_DNA"/>
</dbReference>
<dbReference type="SMR" id="A5FRX7"/>
<dbReference type="KEGG" id="deb:DehaBAV1_0467"/>
<dbReference type="PATRIC" id="fig|216389.18.peg.510"/>
<dbReference type="HOGENOM" id="CLU_098841_0_1_0"/>
<dbReference type="GO" id="GO:0005737">
    <property type="term" value="C:cytoplasm"/>
    <property type="evidence" value="ECO:0007669"/>
    <property type="project" value="UniProtKB-ARBA"/>
</dbReference>
<dbReference type="GO" id="GO:1990904">
    <property type="term" value="C:ribonucleoprotein complex"/>
    <property type="evidence" value="ECO:0007669"/>
    <property type="project" value="UniProtKB-KW"/>
</dbReference>
<dbReference type="GO" id="GO:0005840">
    <property type="term" value="C:ribosome"/>
    <property type="evidence" value="ECO:0007669"/>
    <property type="project" value="UniProtKB-KW"/>
</dbReference>
<dbReference type="GO" id="GO:0008097">
    <property type="term" value="F:5S rRNA binding"/>
    <property type="evidence" value="ECO:0007669"/>
    <property type="project" value="TreeGrafter"/>
</dbReference>
<dbReference type="GO" id="GO:0003735">
    <property type="term" value="F:structural constituent of ribosome"/>
    <property type="evidence" value="ECO:0007669"/>
    <property type="project" value="InterPro"/>
</dbReference>
<dbReference type="GO" id="GO:0006412">
    <property type="term" value="P:translation"/>
    <property type="evidence" value="ECO:0007669"/>
    <property type="project" value="UniProtKB-UniRule"/>
</dbReference>
<dbReference type="CDD" id="cd00432">
    <property type="entry name" value="Ribosomal_L18_L5e"/>
    <property type="match status" value="1"/>
</dbReference>
<dbReference type="FunFam" id="3.30.420.100:FF:000001">
    <property type="entry name" value="50S ribosomal protein L18"/>
    <property type="match status" value="1"/>
</dbReference>
<dbReference type="Gene3D" id="3.30.420.100">
    <property type="match status" value="1"/>
</dbReference>
<dbReference type="HAMAP" id="MF_01337_B">
    <property type="entry name" value="Ribosomal_uL18_B"/>
    <property type="match status" value="1"/>
</dbReference>
<dbReference type="InterPro" id="IPR004389">
    <property type="entry name" value="Ribosomal_uL18_bac-type"/>
</dbReference>
<dbReference type="InterPro" id="IPR005484">
    <property type="entry name" value="Ribosomal_uL18_bac/euk"/>
</dbReference>
<dbReference type="NCBIfam" id="TIGR00060">
    <property type="entry name" value="L18_bact"/>
    <property type="match status" value="1"/>
</dbReference>
<dbReference type="PANTHER" id="PTHR12899">
    <property type="entry name" value="39S RIBOSOMAL PROTEIN L18, MITOCHONDRIAL"/>
    <property type="match status" value="1"/>
</dbReference>
<dbReference type="PANTHER" id="PTHR12899:SF3">
    <property type="entry name" value="LARGE RIBOSOMAL SUBUNIT PROTEIN UL18M"/>
    <property type="match status" value="1"/>
</dbReference>
<dbReference type="Pfam" id="PF00861">
    <property type="entry name" value="Ribosomal_L18p"/>
    <property type="match status" value="1"/>
</dbReference>
<dbReference type="SUPFAM" id="SSF53137">
    <property type="entry name" value="Translational machinery components"/>
    <property type="match status" value="1"/>
</dbReference>
<gene>
    <name evidence="1" type="primary">rplR</name>
    <name type="ordered locus">DehaBAV1_0467</name>
</gene>
<comment type="function">
    <text evidence="1">This is one of the proteins that bind and probably mediate the attachment of the 5S RNA into the large ribosomal subunit, where it forms part of the central protuberance.</text>
</comment>
<comment type="subunit">
    <text evidence="1">Part of the 50S ribosomal subunit; part of the 5S rRNA/L5/L18/L25 subcomplex. Contacts the 5S and 23S rRNAs.</text>
</comment>
<comment type="similarity">
    <text evidence="1">Belongs to the universal ribosomal protein uL18 family.</text>
</comment>